<accession>B5FAG0</accession>
<organism>
    <name type="scientific">Aliivibrio fischeri (strain MJ11)</name>
    <name type="common">Vibrio fischeri</name>
    <dbReference type="NCBI Taxonomy" id="388396"/>
    <lineage>
        <taxon>Bacteria</taxon>
        <taxon>Pseudomonadati</taxon>
        <taxon>Pseudomonadota</taxon>
        <taxon>Gammaproteobacteria</taxon>
        <taxon>Vibrionales</taxon>
        <taxon>Vibrionaceae</taxon>
        <taxon>Aliivibrio</taxon>
    </lineage>
</organism>
<reference key="1">
    <citation type="submission" date="2008-08" db="EMBL/GenBank/DDBJ databases">
        <title>Complete sequence of Vibrio fischeri strain MJ11.</title>
        <authorList>
            <person name="Mandel M.J."/>
            <person name="Stabb E.V."/>
            <person name="Ruby E.G."/>
            <person name="Ferriera S."/>
            <person name="Johnson J."/>
            <person name="Kravitz S."/>
            <person name="Beeson K."/>
            <person name="Sutton G."/>
            <person name="Rogers Y.-H."/>
            <person name="Friedman R."/>
            <person name="Frazier M."/>
            <person name="Venter J.C."/>
        </authorList>
    </citation>
    <scope>NUCLEOTIDE SEQUENCE [LARGE SCALE GENOMIC DNA]</scope>
    <source>
        <strain>MJ11</strain>
    </source>
</reference>
<dbReference type="EC" id="6.3.4.2" evidence="1"/>
<dbReference type="EMBL" id="CP001139">
    <property type="protein sequence ID" value="ACH66493.1"/>
    <property type="molecule type" value="Genomic_DNA"/>
</dbReference>
<dbReference type="RefSeq" id="WP_005420701.1">
    <property type="nucleotide sequence ID" value="NC_011184.1"/>
</dbReference>
<dbReference type="SMR" id="B5FAG0"/>
<dbReference type="MEROPS" id="C26.964"/>
<dbReference type="KEGG" id="vfm:VFMJ11_2182"/>
<dbReference type="HOGENOM" id="CLU_011675_5_0_6"/>
<dbReference type="UniPathway" id="UPA00159">
    <property type="reaction ID" value="UER00277"/>
</dbReference>
<dbReference type="Proteomes" id="UP000001857">
    <property type="component" value="Chromosome I"/>
</dbReference>
<dbReference type="GO" id="GO:0005829">
    <property type="term" value="C:cytosol"/>
    <property type="evidence" value="ECO:0007669"/>
    <property type="project" value="TreeGrafter"/>
</dbReference>
<dbReference type="GO" id="GO:0005524">
    <property type="term" value="F:ATP binding"/>
    <property type="evidence" value="ECO:0007669"/>
    <property type="project" value="UniProtKB-KW"/>
</dbReference>
<dbReference type="GO" id="GO:0003883">
    <property type="term" value="F:CTP synthase activity"/>
    <property type="evidence" value="ECO:0007669"/>
    <property type="project" value="UniProtKB-UniRule"/>
</dbReference>
<dbReference type="GO" id="GO:0004359">
    <property type="term" value="F:glutaminase activity"/>
    <property type="evidence" value="ECO:0007669"/>
    <property type="project" value="RHEA"/>
</dbReference>
<dbReference type="GO" id="GO:0042802">
    <property type="term" value="F:identical protein binding"/>
    <property type="evidence" value="ECO:0007669"/>
    <property type="project" value="TreeGrafter"/>
</dbReference>
<dbReference type="GO" id="GO:0046872">
    <property type="term" value="F:metal ion binding"/>
    <property type="evidence" value="ECO:0007669"/>
    <property type="project" value="UniProtKB-KW"/>
</dbReference>
<dbReference type="GO" id="GO:0044210">
    <property type="term" value="P:'de novo' CTP biosynthetic process"/>
    <property type="evidence" value="ECO:0007669"/>
    <property type="project" value="UniProtKB-UniRule"/>
</dbReference>
<dbReference type="GO" id="GO:0019856">
    <property type="term" value="P:pyrimidine nucleobase biosynthetic process"/>
    <property type="evidence" value="ECO:0007669"/>
    <property type="project" value="TreeGrafter"/>
</dbReference>
<dbReference type="CDD" id="cd03113">
    <property type="entry name" value="CTPS_N"/>
    <property type="match status" value="1"/>
</dbReference>
<dbReference type="CDD" id="cd01746">
    <property type="entry name" value="GATase1_CTP_Synthase"/>
    <property type="match status" value="1"/>
</dbReference>
<dbReference type="FunFam" id="3.40.50.300:FF:000009">
    <property type="entry name" value="CTP synthase"/>
    <property type="match status" value="1"/>
</dbReference>
<dbReference type="FunFam" id="3.40.50.880:FF:000002">
    <property type="entry name" value="CTP synthase"/>
    <property type="match status" value="1"/>
</dbReference>
<dbReference type="Gene3D" id="3.40.50.880">
    <property type="match status" value="1"/>
</dbReference>
<dbReference type="Gene3D" id="3.40.50.300">
    <property type="entry name" value="P-loop containing nucleotide triphosphate hydrolases"/>
    <property type="match status" value="1"/>
</dbReference>
<dbReference type="HAMAP" id="MF_01227">
    <property type="entry name" value="PyrG"/>
    <property type="match status" value="1"/>
</dbReference>
<dbReference type="InterPro" id="IPR029062">
    <property type="entry name" value="Class_I_gatase-like"/>
</dbReference>
<dbReference type="InterPro" id="IPR004468">
    <property type="entry name" value="CTP_synthase"/>
</dbReference>
<dbReference type="InterPro" id="IPR017456">
    <property type="entry name" value="CTP_synthase_N"/>
</dbReference>
<dbReference type="InterPro" id="IPR017926">
    <property type="entry name" value="GATASE"/>
</dbReference>
<dbReference type="InterPro" id="IPR033828">
    <property type="entry name" value="GATase1_CTP_Synthase"/>
</dbReference>
<dbReference type="InterPro" id="IPR027417">
    <property type="entry name" value="P-loop_NTPase"/>
</dbReference>
<dbReference type="NCBIfam" id="NF003792">
    <property type="entry name" value="PRK05380.1"/>
    <property type="match status" value="1"/>
</dbReference>
<dbReference type="NCBIfam" id="TIGR00337">
    <property type="entry name" value="PyrG"/>
    <property type="match status" value="1"/>
</dbReference>
<dbReference type="PANTHER" id="PTHR11550">
    <property type="entry name" value="CTP SYNTHASE"/>
    <property type="match status" value="1"/>
</dbReference>
<dbReference type="PANTHER" id="PTHR11550:SF0">
    <property type="entry name" value="CTP SYNTHASE-RELATED"/>
    <property type="match status" value="1"/>
</dbReference>
<dbReference type="Pfam" id="PF06418">
    <property type="entry name" value="CTP_synth_N"/>
    <property type="match status" value="1"/>
</dbReference>
<dbReference type="Pfam" id="PF00117">
    <property type="entry name" value="GATase"/>
    <property type="match status" value="1"/>
</dbReference>
<dbReference type="SUPFAM" id="SSF52317">
    <property type="entry name" value="Class I glutamine amidotransferase-like"/>
    <property type="match status" value="1"/>
</dbReference>
<dbReference type="SUPFAM" id="SSF52540">
    <property type="entry name" value="P-loop containing nucleoside triphosphate hydrolases"/>
    <property type="match status" value="1"/>
</dbReference>
<dbReference type="PROSITE" id="PS51273">
    <property type="entry name" value="GATASE_TYPE_1"/>
    <property type="match status" value="1"/>
</dbReference>
<evidence type="ECO:0000255" key="1">
    <source>
        <dbReference type="HAMAP-Rule" id="MF_01227"/>
    </source>
</evidence>
<gene>
    <name evidence="1" type="primary">pyrG</name>
    <name type="ordered locus">VFMJ11_2182</name>
</gene>
<feature type="chain" id="PRO_1000139600" description="CTP synthase">
    <location>
        <begin position="1"/>
        <end position="546"/>
    </location>
</feature>
<feature type="domain" description="Glutamine amidotransferase type-1" evidence="1">
    <location>
        <begin position="291"/>
        <end position="542"/>
    </location>
</feature>
<feature type="region of interest" description="Amidoligase domain" evidence="1">
    <location>
        <begin position="1"/>
        <end position="266"/>
    </location>
</feature>
<feature type="active site" description="Nucleophile; for glutamine hydrolysis" evidence="1">
    <location>
        <position position="379"/>
    </location>
</feature>
<feature type="active site" evidence="1">
    <location>
        <position position="515"/>
    </location>
</feature>
<feature type="active site" evidence="1">
    <location>
        <position position="517"/>
    </location>
</feature>
<feature type="binding site" evidence="1">
    <location>
        <position position="14"/>
    </location>
    <ligand>
        <name>CTP</name>
        <dbReference type="ChEBI" id="CHEBI:37563"/>
        <note>allosteric inhibitor</note>
    </ligand>
</feature>
<feature type="binding site" evidence="1">
    <location>
        <position position="14"/>
    </location>
    <ligand>
        <name>UTP</name>
        <dbReference type="ChEBI" id="CHEBI:46398"/>
    </ligand>
</feature>
<feature type="binding site" evidence="1">
    <location>
        <begin position="15"/>
        <end position="20"/>
    </location>
    <ligand>
        <name>ATP</name>
        <dbReference type="ChEBI" id="CHEBI:30616"/>
    </ligand>
</feature>
<feature type="binding site" evidence="1">
    <location>
        <position position="72"/>
    </location>
    <ligand>
        <name>ATP</name>
        <dbReference type="ChEBI" id="CHEBI:30616"/>
    </ligand>
</feature>
<feature type="binding site" evidence="1">
    <location>
        <position position="72"/>
    </location>
    <ligand>
        <name>Mg(2+)</name>
        <dbReference type="ChEBI" id="CHEBI:18420"/>
    </ligand>
</feature>
<feature type="binding site" evidence="1">
    <location>
        <position position="140"/>
    </location>
    <ligand>
        <name>Mg(2+)</name>
        <dbReference type="ChEBI" id="CHEBI:18420"/>
    </ligand>
</feature>
<feature type="binding site" evidence="1">
    <location>
        <begin position="147"/>
        <end position="149"/>
    </location>
    <ligand>
        <name>CTP</name>
        <dbReference type="ChEBI" id="CHEBI:37563"/>
        <note>allosteric inhibitor</note>
    </ligand>
</feature>
<feature type="binding site" evidence="1">
    <location>
        <begin position="187"/>
        <end position="192"/>
    </location>
    <ligand>
        <name>CTP</name>
        <dbReference type="ChEBI" id="CHEBI:37563"/>
        <note>allosteric inhibitor</note>
    </ligand>
</feature>
<feature type="binding site" evidence="1">
    <location>
        <begin position="187"/>
        <end position="192"/>
    </location>
    <ligand>
        <name>UTP</name>
        <dbReference type="ChEBI" id="CHEBI:46398"/>
    </ligand>
</feature>
<feature type="binding site" evidence="1">
    <location>
        <position position="223"/>
    </location>
    <ligand>
        <name>CTP</name>
        <dbReference type="ChEBI" id="CHEBI:37563"/>
        <note>allosteric inhibitor</note>
    </ligand>
</feature>
<feature type="binding site" evidence="1">
    <location>
        <position position="223"/>
    </location>
    <ligand>
        <name>UTP</name>
        <dbReference type="ChEBI" id="CHEBI:46398"/>
    </ligand>
</feature>
<feature type="binding site" evidence="1">
    <location>
        <begin position="239"/>
        <end position="241"/>
    </location>
    <ligand>
        <name>ATP</name>
        <dbReference type="ChEBI" id="CHEBI:30616"/>
    </ligand>
</feature>
<feature type="binding site" evidence="1">
    <location>
        <position position="352"/>
    </location>
    <ligand>
        <name>L-glutamine</name>
        <dbReference type="ChEBI" id="CHEBI:58359"/>
    </ligand>
</feature>
<feature type="binding site" evidence="1">
    <location>
        <begin position="380"/>
        <end position="383"/>
    </location>
    <ligand>
        <name>L-glutamine</name>
        <dbReference type="ChEBI" id="CHEBI:58359"/>
    </ligand>
</feature>
<feature type="binding site" evidence="1">
    <location>
        <position position="403"/>
    </location>
    <ligand>
        <name>L-glutamine</name>
        <dbReference type="ChEBI" id="CHEBI:58359"/>
    </ligand>
</feature>
<feature type="binding site" evidence="1">
    <location>
        <position position="470"/>
    </location>
    <ligand>
        <name>L-glutamine</name>
        <dbReference type="ChEBI" id="CHEBI:58359"/>
    </ligand>
</feature>
<comment type="function">
    <text evidence="1">Catalyzes the ATP-dependent amination of UTP to CTP with either L-glutamine or ammonia as the source of nitrogen. Regulates intracellular CTP levels through interactions with the four ribonucleotide triphosphates.</text>
</comment>
<comment type="catalytic activity">
    <reaction evidence="1">
        <text>UTP + L-glutamine + ATP + H2O = CTP + L-glutamate + ADP + phosphate + 2 H(+)</text>
        <dbReference type="Rhea" id="RHEA:26426"/>
        <dbReference type="ChEBI" id="CHEBI:15377"/>
        <dbReference type="ChEBI" id="CHEBI:15378"/>
        <dbReference type="ChEBI" id="CHEBI:29985"/>
        <dbReference type="ChEBI" id="CHEBI:30616"/>
        <dbReference type="ChEBI" id="CHEBI:37563"/>
        <dbReference type="ChEBI" id="CHEBI:43474"/>
        <dbReference type="ChEBI" id="CHEBI:46398"/>
        <dbReference type="ChEBI" id="CHEBI:58359"/>
        <dbReference type="ChEBI" id="CHEBI:456216"/>
        <dbReference type="EC" id="6.3.4.2"/>
    </reaction>
</comment>
<comment type="catalytic activity">
    <reaction evidence="1">
        <text>L-glutamine + H2O = L-glutamate + NH4(+)</text>
        <dbReference type="Rhea" id="RHEA:15889"/>
        <dbReference type="ChEBI" id="CHEBI:15377"/>
        <dbReference type="ChEBI" id="CHEBI:28938"/>
        <dbReference type="ChEBI" id="CHEBI:29985"/>
        <dbReference type="ChEBI" id="CHEBI:58359"/>
    </reaction>
</comment>
<comment type="catalytic activity">
    <reaction evidence="1">
        <text>UTP + NH4(+) + ATP = CTP + ADP + phosphate + 2 H(+)</text>
        <dbReference type="Rhea" id="RHEA:16597"/>
        <dbReference type="ChEBI" id="CHEBI:15378"/>
        <dbReference type="ChEBI" id="CHEBI:28938"/>
        <dbReference type="ChEBI" id="CHEBI:30616"/>
        <dbReference type="ChEBI" id="CHEBI:37563"/>
        <dbReference type="ChEBI" id="CHEBI:43474"/>
        <dbReference type="ChEBI" id="CHEBI:46398"/>
        <dbReference type="ChEBI" id="CHEBI:456216"/>
    </reaction>
</comment>
<comment type="activity regulation">
    <text evidence="1">Allosterically activated by GTP, when glutamine is the substrate; GTP has no effect on the reaction when ammonia is the substrate. The allosteric effector GTP functions by stabilizing the protein conformation that binds the tetrahedral intermediate(s) formed during glutamine hydrolysis. Inhibited by the product CTP, via allosteric rather than competitive inhibition.</text>
</comment>
<comment type="pathway">
    <text evidence="1">Pyrimidine metabolism; CTP biosynthesis via de novo pathway; CTP from UDP: step 2/2.</text>
</comment>
<comment type="subunit">
    <text evidence="1">Homotetramer.</text>
</comment>
<comment type="miscellaneous">
    <text evidence="1">CTPSs have evolved a hybrid strategy for distinguishing between UTP and CTP. The overlapping regions of the product feedback inhibitory and substrate sites recognize a common feature in both compounds, the triphosphate moiety. To differentiate isosteric substrate and product pyrimidine rings, an additional pocket far from the expected kinase/ligase catalytic site, specifically recognizes the cytosine and ribose portions of the product inhibitor.</text>
</comment>
<comment type="similarity">
    <text evidence="1">Belongs to the CTP synthase family.</text>
</comment>
<keyword id="KW-0067">ATP-binding</keyword>
<keyword id="KW-0315">Glutamine amidotransferase</keyword>
<keyword id="KW-0436">Ligase</keyword>
<keyword id="KW-0460">Magnesium</keyword>
<keyword id="KW-0479">Metal-binding</keyword>
<keyword id="KW-0547">Nucleotide-binding</keyword>
<keyword id="KW-0665">Pyrimidine biosynthesis</keyword>
<name>PYRG_ALIFM</name>
<sequence>MTTNYIFVTGGVVSSLGKGIAAASLAAILEARGLKVTMMKLDPYINVDPGTMSPTQHGEVFVTEDGAETDLDLGHYERFIRTKMTKRNNFTAGRVYADVLRKERRGDYLGATIQVIPHITNAIKERVISGAEGHDIAIVEVGGTVGDIESLPFMEAIRQLAVELGRERAMFMHLTLVPYLGAAGELKTKPTQHSVKELLSIGIQPDILVCRSDRVIPANERKKIALFCNVQEKAVISMKDVDSIYKIPQLIKAQGTDDLVCQRFGITAPEADLSEWEQVIYEEANPTGDVVIGMVGKYIELPDAYKSVNEALKHAGLKNRLNVTIKYVDSQDVESKGTEILEGLDAILVPGGFGDRGVEGKILAAQYARENKVPYLGICLGMQVALIEYARNVANMEGAHSSEFSKDTKFPVVGLITEWIDSEGNVEERTEKSDLGGTMRLGSQLCHLAKGSKARELYGNATVEERHRHRYEVNNNLLPQLEKAGLKVSGLSADKKLVEIIEIPNHPWFVAAQFHPEFTSTPRDGHPLFEGFVKAAGESVRGELEK</sequence>
<proteinExistence type="inferred from homology"/>
<protein>
    <recommendedName>
        <fullName evidence="1">CTP synthase</fullName>
        <ecNumber evidence="1">6.3.4.2</ecNumber>
    </recommendedName>
    <alternativeName>
        <fullName evidence="1">Cytidine 5'-triphosphate synthase</fullName>
    </alternativeName>
    <alternativeName>
        <fullName evidence="1">Cytidine triphosphate synthetase</fullName>
        <shortName evidence="1">CTP synthetase</shortName>
        <shortName evidence="1">CTPS</shortName>
    </alternativeName>
    <alternativeName>
        <fullName evidence="1">UTP--ammonia ligase</fullName>
    </alternativeName>
</protein>